<comment type="function">
    <text evidence="1">Binds to DNA and alters its conformation. May be involved in regulation of gene expression, nucleoid organization and DNA protection.</text>
</comment>
<comment type="subunit">
    <text evidence="1">Homodimer.</text>
</comment>
<comment type="subcellular location">
    <subcellularLocation>
        <location evidence="1">Cytoplasm</location>
        <location evidence="1">Nucleoid</location>
    </subcellularLocation>
</comment>
<comment type="similarity">
    <text evidence="1">Belongs to the YbaB/EbfC family.</text>
</comment>
<organism>
    <name type="scientific">Streptomyces avermitilis (strain ATCC 31267 / DSM 46492 / JCM 5070 / NBRC 14893 / NCIMB 12804 / NRRL 8165 / MA-4680)</name>
    <dbReference type="NCBI Taxonomy" id="227882"/>
    <lineage>
        <taxon>Bacteria</taxon>
        <taxon>Bacillati</taxon>
        <taxon>Actinomycetota</taxon>
        <taxon>Actinomycetes</taxon>
        <taxon>Kitasatosporales</taxon>
        <taxon>Streptomycetaceae</taxon>
        <taxon>Streptomyces</taxon>
    </lineage>
</organism>
<accession>Q82EQ8</accession>
<reference key="1">
    <citation type="journal article" date="2001" name="Proc. Natl. Acad. Sci. U.S.A.">
        <title>Genome sequence of an industrial microorganism Streptomyces avermitilis: deducing the ability of producing secondary metabolites.</title>
        <authorList>
            <person name="Omura S."/>
            <person name="Ikeda H."/>
            <person name="Ishikawa J."/>
            <person name="Hanamoto A."/>
            <person name="Takahashi C."/>
            <person name="Shinose M."/>
            <person name="Takahashi Y."/>
            <person name="Horikawa H."/>
            <person name="Nakazawa H."/>
            <person name="Osonoe T."/>
            <person name="Kikuchi H."/>
            <person name="Shiba T."/>
            <person name="Sakaki Y."/>
            <person name="Hattori M."/>
        </authorList>
    </citation>
    <scope>NUCLEOTIDE SEQUENCE [LARGE SCALE GENOMIC DNA]</scope>
    <source>
        <strain>ATCC 31267 / DSM 46492 / JCM 5070 / NBRC 14893 / NCIMB 12804 / NRRL 8165 / MA-4680</strain>
    </source>
</reference>
<reference key="2">
    <citation type="journal article" date="2003" name="Nat. Biotechnol.">
        <title>Complete genome sequence and comparative analysis of the industrial microorganism Streptomyces avermitilis.</title>
        <authorList>
            <person name="Ikeda H."/>
            <person name="Ishikawa J."/>
            <person name="Hanamoto A."/>
            <person name="Shinose M."/>
            <person name="Kikuchi H."/>
            <person name="Shiba T."/>
            <person name="Sakaki Y."/>
            <person name="Hattori M."/>
            <person name="Omura S."/>
        </authorList>
    </citation>
    <scope>NUCLEOTIDE SEQUENCE [LARGE SCALE GENOMIC DNA]</scope>
    <source>
        <strain>ATCC 31267 / DSM 46492 / JCM 5070 / NBRC 14893 / NCIMB 12804 / NRRL 8165 / MA-4680</strain>
    </source>
</reference>
<dbReference type="EMBL" id="BA000030">
    <property type="protein sequence ID" value="BAC72268.1"/>
    <property type="molecule type" value="Genomic_DNA"/>
</dbReference>
<dbReference type="RefSeq" id="WP_010985981.1">
    <property type="nucleotide sequence ID" value="NZ_JZJK01000062.1"/>
</dbReference>
<dbReference type="SMR" id="Q82EQ8"/>
<dbReference type="GeneID" id="41541638"/>
<dbReference type="KEGG" id="sma:SAVERM_4556"/>
<dbReference type="eggNOG" id="COG0718">
    <property type="taxonomic scope" value="Bacteria"/>
</dbReference>
<dbReference type="HOGENOM" id="CLU_140930_4_0_11"/>
<dbReference type="OrthoDB" id="9809370at2"/>
<dbReference type="Proteomes" id="UP000000428">
    <property type="component" value="Chromosome"/>
</dbReference>
<dbReference type="GO" id="GO:0043590">
    <property type="term" value="C:bacterial nucleoid"/>
    <property type="evidence" value="ECO:0007669"/>
    <property type="project" value="UniProtKB-UniRule"/>
</dbReference>
<dbReference type="GO" id="GO:0005829">
    <property type="term" value="C:cytosol"/>
    <property type="evidence" value="ECO:0007669"/>
    <property type="project" value="TreeGrafter"/>
</dbReference>
<dbReference type="GO" id="GO:0003677">
    <property type="term" value="F:DNA binding"/>
    <property type="evidence" value="ECO:0007669"/>
    <property type="project" value="UniProtKB-UniRule"/>
</dbReference>
<dbReference type="FunFam" id="3.30.1310.10:FF:000003">
    <property type="entry name" value="Nucleoid-associated protein MRA_3753"/>
    <property type="match status" value="1"/>
</dbReference>
<dbReference type="Gene3D" id="3.30.1310.10">
    <property type="entry name" value="Nucleoid-associated protein YbaB-like domain"/>
    <property type="match status" value="1"/>
</dbReference>
<dbReference type="HAMAP" id="MF_00274">
    <property type="entry name" value="DNA_YbaB_EbfC"/>
    <property type="match status" value="1"/>
</dbReference>
<dbReference type="InterPro" id="IPR036894">
    <property type="entry name" value="YbaB-like_sf"/>
</dbReference>
<dbReference type="InterPro" id="IPR004401">
    <property type="entry name" value="YbaB/EbfC"/>
</dbReference>
<dbReference type="NCBIfam" id="TIGR00103">
    <property type="entry name" value="DNA_YbaB_EbfC"/>
    <property type="match status" value="1"/>
</dbReference>
<dbReference type="PANTHER" id="PTHR33449">
    <property type="entry name" value="NUCLEOID-ASSOCIATED PROTEIN YBAB"/>
    <property type="match status" value="1"/>
</dbReference>
<dbReference type="PANTHER" id="PTHR33449:SF1">
    <property type="entry name" value="NUCLEOID-ASSOCIATED PROTEIN YBAB"/>
    <property type="match status" value="1"/>
</dbReference>
<dbReference type="Pfam" id="PF02575">
    <property type="entry name" value="YbaB_DNA_bd"/>
    <property type="match status" value="1"/>
</dbReference>
<dbReference type="PIRSF" id="PIRSF004555">
    <property type="entry name" value="UCP004555"/>
    <property type="match status" value="1"/>
</dbReference>
<dbReference type="SUPFAM" id="SSF82607">
    <property type="entry name" value="YbaB-like"/>
    <property type="match status" value="1"/>
</dbReference>
<proteinExistence type="inferred from homology"/>
<evidence type="ECO:0000255" key="1">
    <source>
        <dbReference type="HAMAP-Rule" id="MF_00274"/>
    </source>
</evidence>
<protein>
    <recommendedName>
        <fullName evidence="1">Nucleoid-associated protein SAV_4556</fullName>
    </recommendedName>
</protein>
<feature type="chain" id="PRO_0000170445" description="Nucleoid-associated protein SAV_4556">
    <location>
        <begin position="1"/>
        <end position="113"/>
    </location>
</feature>
<name>Y4556_STRAW</name>
<gene>
    <name type="ordered locus">SAV_4556</name>
</gene>
<keyword id="KW-0963">Cytoplasm</keyword>
<keyword id="KW-0238">DNA-binding</keyword>
<keyword id="KW-1185">Reference proteome</keyword>
<sequence>MIPGGGQPNMQQLLQQAQKMQQDLANAQEELARTEVEGQAGGGLVKATVTGSGELRALVIDPKAVDPEDTETLADLVVAAVQAANENAQALQQQKLGPLAQGLGGGGIPGLPF</sequence>